<dbReference type="EC" id="1.2.1.88"/>
<dbReference type="EMBL" id="BC055155">
    <property type="protein sequence ID" value="AAH55155.1"/>
    <property type="molecule type" value="mRNA"/>
</dbReference>
<dbReference type="RefSeq" id="NP_957452.1">
    <property type="nucleotide sequence ID" value="NM_201158.1"/>
</dbReference>
<dbReference type="SMR" id="Q7SY23"/>
<dbReference type="FunCoup" id="Q7SY23">
    <property type="interactions" value="2208"/>
</dbReference>
<dbReference type="STRING" id="7955.ENSDARP00000142254"/>
<dbReference type="PaxDb" id="7955-ENSDARP00000055709"/>
<dbReference type="GeneID" id="394133"/>
<dbReference type="KEGG" id="dre:394133"/>
<dbReference type="AGR" id="ZFIN:ZDB-GENE-040426-1179"/>
<dbReference type="CTD" id="8659"/>
<dbReference type="ZFIN" id="ZDB-GENE-040426-1179">
    <property type="gene designation" value="aldh4a1"/>
</dbReference>
<dbReference type="eggNOG" id="KOG2455">
    <property type="taxonomic scope" value="Eukaryota"/>
</dbReference>
<dbReference type="InParanoid" id="Q7SY23"/>
<dbReference type="OrthoDB" id="5322683at2759"/>
<dbReference type="PhylomeDB" id="Q7SY23"/>
<dbReference type="Reactome" id="R-DRE-389661">
    <property type="pathway name" value="Glyoxylate metabolism and glycine degradation"/>
</dbReference>
<dbReference type="Reactome" id="R-DRE-70688">
    <property type="pathway name" value="Proline catabolism"/>
</dbReference>
<dbReference type="UniPathway" id="UPA00261">
    <property type="reaction ID" value="UER00374"/>
</dbReference>
<dbReference type="PRO" id="PR:Q7SY23"/>
<dbReference type="Proteomes" id="UP000000437">
    <property type="component" value="Chromosome 11"/>
</dbReference>
<dbReference type="GO" id="GO:0005759">
    <property type="term" value="C:mitochondrial matrix"/>
    <property type="evidence" value="ECO:0007669"/>
    <property type="project" value="UniProtKB-SubCell"/>
</dbReference>
<dbReference type="GO" id="GO:0003842">
    <property type="term" value="F:1-pyrroline-5-carboxylate dehydrogenase activity"/>
    <property type="evidence" value="ECO:0000318"/>
    <property type="project" value="GO_Central"/>
</dbReference>
<dbReference type="GO" id="GO:0010133">
    <property type="term" value="P:proline catabolic process to glutamate"/>
    <property type="evidence" value="ECO:0007669"/>
    <property type="project" value="UniProtKB-UniPathway"/>
</dbReference>
<dbReference type="CDD" id="cd07123">
    <property type="entry name" value="ALDH_F4-17_P5CDH"/>
    <property type="match status" value="1"/>
</dbReference>
<dbReference type="FunFam" id="3.40.605.10:FF:000006">
    <property type="entry name" value="1-pyrroline-5-carboxylate dehydrogenase"/>
    <property type="match status" value="1"/>
</dbReference>
<dbReference type="FunFam" id="3.40.309.10:FF:000005">
    <property type="entry name" value="1-pyrroline-5-carboxylate dehydrogenase 1"/>
    <property type="match status" value="1"/>
</dbReference>
<dbReference type="Gene3D" id="3.40.605.10">
    <property type="entry name" value="Aldehyde Dehydrogenase, Chain A, domain 1"/>
    <property type="match status" value="1"/>
</dbReference>
<dbReference type="Gene3D" id="3.40.309.10">
    <property type="entry name" value="Aldehyde Dehydrogenase, Chain A, domain 2"/>
    <property type="match status" value="1"/>
</dbReference>
<dbReference type="InterPro" id="IPR016161">
    <property type="entry name" value="Ald_DH/histidinol_DH"/>
</dbReference>
<dbReference type="InterPro" id="IPR016163">
    <property type="entry name" value="Ald_DH_C"/>
</dbReference>
<dbReference type="InterPro" id="IPR016160">
    <property type="entry name" value="Ald_DH_CS_CYS"/>
</dbReference>
<dbReference type="InterPro" id="IPR029510">
    <property type="entry name" value="Ald_DH_CS_GLU"/>
</dbReference>
<dbReference type="InterPro" id="IPR016162">
    <property type="entry name" value="Ald_DH_N"/>
</dbReference>
<dbReference type="InterPro" id="IPR015590">
    <property type="entry name" value="Aldehyde_DH_dom"/>
</dbReference>
<dbReference type="InterPro" id="IPR005931">
    <property type="entry name" value="P5CDH/ALDH4A1"/>
</dbReference>
<dbReference type="NCBIfam" id="TIGR01236">
    <property type="entry name" value="D1pyr5carbox1"/>
    <property type="match status" value="1"/>
</dbReference>
<dbReference type="PANTHER" id="PTHR14516">
    <property type="entry name" value="1-PYRROLINE-5-CARBOXYLATE DEHYDROGENASE FAMILY MEMBER"/>
    <property type="match status" value="1"/>
</dbReference>
<dbReference type="PANTHER" id="PTHR14516:SF3">
    <property type="entry name" value="DELTA-1-PYRROLINE-5-CARBOXYLATE DEHYDROGENASE, MITOCHONDRIAL"/>
    <property type="match status" value="1"/>
</dbReference>
<dbReference type="Pfam" id="PF00171">
    <property type="entry name" value="Aldedh"/>
    <property type="match status" value="1"/>
</dbReference>
<dbReference type="SUPFAM" id="SSF53720">
    <property type="entry name" value="ALDH-like"/>
    <property type="match status" value="1"/>
</dbReference>
<dbReference type="PROSITE" id="PS00070">
    <property type="entry name" value="ALDEHYDE_DEHYDR_CYS"/>
    <property type="match status" value="1"/>
</dbReference>
<dbReference type="PROSITE" id="PS00687">
    <property type="entry name" value="ALDEHYDE_DEHYDR_GLU"/>
    <property type="match status" value="1"/>
</dbReference>
<organism>
    <name type="scientific">Danio rerio</name>
    <name type="common">Zebrafish</name>
    <name type="synonym">Brachydanio rerio</name>
    <dbReference type="NCBI Taxonomy" id="7955"/>
    <lineage>
        <taxon>Eukaryota</taxon>
        <taxon>Metazoa</taxon>
        <taxon>Chordata</taxon>
        <taxon>Craniata</taxon>
        <taxon>Vertebrata</taxon>
        <taxon>Euteleostomi</taxon>
        <taxon>Actinopterygii</taxon>
        <taxon>Neopterygii</taxon>
        <taxon>Teleostei</taxon>
        <taxon>Ostariophysi</taxon>
        <taxon>Cypriniformes</taxon>
        <taxon>Danionidae</taxon>
        <taxon>Danioninae</taxon>
        <taxon>Danio</taxon>
    </lineage>
</organism>
<evidence type="ECO:0000250" key="1"/>
<evidence type="ECO:0000255" key="2">
    <source>
        <dbReference type="PROSITE-ProRule" id="PRU10007"/>
    </source>
</evidence>
<evidence type="ECO:0000255" key="3">
    <source>
        <dbReference type="PROSITE-ProRule" id="PRU10008"/>
    </source>
</evidence>
<evidence type="ECO:0000305" key="4"/>
<proteinExistence type="evidence at transcript level"/>
<name>AL4A1_DANRE</name>
<gene>
    <name type="primary">aldh4a1</name>
    <name type="ORF">zgc:63592</name>
</gene>
<protein>
    <recommendedName>
        <fullName>Delta-1-pyrroline-5-carboxylate dehydrogenase, mitochondrial</fullName>
        <shortName>P5C dehydrogenase</shortName>
        <ecNumber>1.2.1.88</ecNumber>
    </recommendedName>
    <alternativeName>
        <fullName>Aldehyde dehydrogenase family 4 member A1</fullName>
    </alternativeName>
    <alternativeName>
        <fullName>L-glutamate gamma-semialdehyde dehydrogenase</fullName>
    </alternativeName>
</protein>
<feature type="transit peptide" description="Mitochondrion" evidence="1">
    <location>
        <begin position="1"/>
        <end position="17"/>
    </location>
</feature>
<feature type="chain" id="PRO_0000007175" description="Delta-1-pyrroline-5-carboxylate dehydrogenase, mitochondrial">
    <location>
        <begin position="18"/>
        <end position="556"/>
    </location>
</feature>
<feature type="active site" description="Proton acceptor" evidence="2 3">
    <location>
        <position position="307"/>
    </location>
</feature>
<feature type="active site" description="Nucleophile" evidence="2 3">
    <location>
        <position position="341"/>
    </location>
</feature>
<feature type="binding site" evidence="1">
    <location>
        <position position="226"/>
    </location>
    <ligand>
        <name>NAD(+)</name>
        <dbReference type="ChEBI" id="CHEBI:57540"/>
    </ligand>
</feature>
<feature type="binding site" evidence="1">
    <location>
        <begin position="279"/>
        <end position="283"/>
    </location>
    <ligand>
        <name>NAD(+)</name>
        <dbReference type="ChEBI" id="CHEBI:57540"/>
    </ligand>
</feature>
<feature type="binding site" evidence="1">
    <location>
        <position position="440"/>
    </location>
    <ligand>
        <name>NAD(+)</name>
        <dbReference type="ChEBI" id="CHEBI:57540"/>
    </ligand>
</feature>
<feature type="binding site" evidence="1">
    <location>
        <position position="506"/>
    </location>
    <ligand>
        <name>substrate</name>
    </ligand>
</feature>
<feature type="site" description="Transition state stabilizer" evidence="1">
    <location>
        <position position="204"/>
    </location>
</feature>
<comment type="function">
    <text evidence="1">Irreversible conversion of delta-1-pyrroline-5-carboxylate (P5C), derived either from proline or ornithine, to glutamate. This is a necessary step in the pathway interconnecting the urea and tricarboxylic acid cycles (By similarity).</text>
</comment>
<comment type="catalytic activity">
    <reaction>
        <text>L-glutamate 5-semialdehyde + NAD(+) + H2O = L-glutamate + NADH + 2 H(+)</text>
        <dbReference type="Rhea" id="RHEA:30235"/>
        <dbReference type="ChEBI" id="CHEBI:15377"/>
        <dbReference type="ChEBI" id="CHEBI:15378"/>
        <dbReference type="ChEBI" id="CHEBI:29985"/>
        <dbReference type="ChEBI" id="CHEBI:57540"/>
        <dbReference type="ChEBI" id="CHEBI:57945"/>
        <dbReference type="ChEBI" id="CHEBI:58066"/>
        <dbReference type="EC" id="1.2.1.88"/>
    </reaction>
</comment>
<comment type="pathway">
    <text>Amino-acid degradation; L-proline degradation into L-glutamate; L-glutamate from L-proline: step 2/2.</text>
</comment>
<comment type="subcellular location">
    <subcellularLocation>
        <location evidence="1">Mitochondrion matrix</location>
    </subcellularLocation>
</comment>
<comment type="similarity">
    <text evidence="4">Belongs to the aldehyde dehydrogenase family.</text>
</comment>
<accession>Q7SY23</accession>
<reference key="1">
    <citation type="submission" date="2003-07" db="EMBL/GenBank/DDBJ databases">
        <authorList>
            <consortium name="NIH - Zebrafish Gene Collection (ZGC) project"/>
        </authorList>
    </citation>
    <scope>NUCLEOTIDE SEQUENCE [LARGE SCALE MRNA]</scope>
    <source>
        <strain>SJD</strain>
    </source>
</reference>
<sequence length="556" mass="61587">MLRARSAVSQSWKGFKTFSCVAVEVKNEPVLEFKEGSKERAELEEALRNLKGKTEEIPCVIGNEEVWTKDIRFQLSPFNHSHQVAKFCYADKDLLNKAIEASVAARREWDLKPVSDRAQIFFKAADIISGPKRAEVLAKTMIGQGKTVVQAEIDAAPELIDFFRFNAKHAIELEDQQPLDSDGSTNTMLYRGLEGFVAAVAPFNFTAIGGNLAGTPALMGNVVLWKPSDTAMSASYAVYKILRESGLPPNIIQFVPADGPVFGDTVTSSEHLAGINFTGSVPTFKRLWKQVAQNLDIYKNFPRVAGECGGKNFHFVHKSADVRSVVTGTIRSAFEYGGQKCSACSRMYVPDSLWPQIRQGLLDVYKQIKVGDPVEDFSTFFSAVIDDKSFSRIKGWLEHARSSPHLKIIAGGNCDDKKGYFVEPTIIETTDPQEKIMNEEIFGPVLTVYVYPENDYKKVLHLIDNTSPYALTGAIFPQDKSVIEEAGKALRNAAGNYYINDKSTGSIVAQQPFGGARASGTNDKPGGPHYVLRWTSPQVVKQTHVPLTEWKYPYMS</sequence>
<keyword id="KW-0496">Mitochondrion</keyword>
<keyword id="KW-0520">NAD</keyword>
<keyword id="KW-0560">Oxidoreductase</keyword>
<keyword id="KW-0642">Proline metabolism</keyword>
<keyword id="KW-1185">Reference proteome</keyword>
<keyword id="KW-0809">Transit peptide</keyword>